<dbReference type="EC" id="5.6.1.4" evidence="9 13 14 21 22"/>
<dbReference type="EMBL" id="M31719">
    <property type="protein sequence ID" value="AAA34715.1"/>
    <property type="molecule type" value="mRNA"/>
</dbReference>
<dbReference type="EMBL" id="U40829">
    <property type="protein sequence ID" value="AAB68281.1"/>
    <property type="molecule type" value="Genomic_DNA"/>
</dbReference>
<dbReference type="EMBL" id="BK006949">
    <property type="protein sequence ID" value="DAA11555.1"/>
    <property type="molecule type" value="Genomic_DNA"/>
</dbReference>
<dbReference type="PIR" id="A34796">
    <property type="entry name" value="A34796"/>
</dbReference>
<dbReference type="RefSeq" id="NP_015467.1">
    <property type="nucleotide sequence ID" value="NM_001184238.1"/>
</dbReference>
<dbReference type="PDB" id="1F9T">
    <property type="method" value="X-ray"/>
    <property type="resolution" value="1.50 A"/>
    <property type="chains" value="A=372-729"/>
</dbReference>
<dbReference type="PDB" id="1F9U">
    <property type="method" value="X-ray"/>
    <property type="resolution" value="1.70 A"/>
    <property type="chains" value="A=383-729"/>
</dbReference>
<dbReference type="PDB" id="1F9V">
    <property type="method" value="X-ray"/>
    <property type="resolution" value="1.30 A"/>
    <property type="chains" value="A=383-729"/>
</dbReference>
<dbReference type="PDB" id="1F9W">
    <property type="method" value="X-ray"/>
    <property type="resolution" value="2.50 A"/>
    <property type="chains" value="A/B=383-729"/>
</dbReference>
<dbReference type="PDB" id="3KAR">
    <property type="method" value="X-ray"/>
    <property type="resolution" value="2.30 A"/>
    <property type="chains" value="A=385-729"/>
</dbReference>
<dbReference type="PDB" id="4ETP">
    <property type="method" value="X-ray"/>
    <property type="resolution" value="2.30 A"/>
    <property type="chains" value="A=348-729"/>
</dbReference>
<dbReference type="PDBsum" id="1F9T"/>
<dbReference type="PDBsum" id="1F9U"/>
<dbReference type="PDBsum" id="1F9V"/>
<dbReference type="PDBsum" id="1F9W"/>
<dbReference type="PDBsum" id="3KAR"/>
<dbReference type="PDBsum" id="4ETP"/>
<dbReference type="SMR" id="P17119"/>
<dbReference type="BioGRID" id="36310">
    <property type="interactions" value="641"/>
</dbReference>
<dbReference type="DIP" id="DIP-75N"/>
<dbReference type="FunCoup" id="P17119">
    <property type="interactions" value="471"/>
</dbReference>
<dbReference type="IntAct" id="P17119">
    <property type="interactions" value="9"/>
</dbReference>
<dbReference type="MINT" id="P17119"/>
<dbReference type="STRING" id="4932.YPR141C"/>
<dbReference type="iPTMnet" id="P17119"/>
<dbReference type="PaxDb" id="4932-YPR141C"/>
<dbReference type="PeptideAtlas" id="P17119"/>
<dbReference type="EnsemblFungi" id="YPR141C_mRNA">
    <property type="protein sequence ID" value="YPR141C"/>
    <property type="gene ID" value="YPR141C"/>
</dbReference>
<dbReference type="GeneID" id="856263"/>
<dbReference type="KEGG" id="sce:YPR141C"/>
<dbReference type="AGR" id="SGD:S000006345"/>
<dbReference type="SGD" id="S000006345">
    <property type="gene designation" value="KAR3"/>
</dbReference>
<dbReference type="VEuPathDB" id="FungiDB:YPR141C"/>
<dbReference type="eggNOG" id="KOG0239">
    <property type="taxonomic scope" value="Eukaryota"/>
</dbReference>
<dbReference type="GeneTree" id="ENSGT00940000154022"/>
<dbReference type="HOGENOM" id="CLU_001485_12_4_1"/>
<dbReference type="InParanoid" id="P17119"/>
<dbReference type="OMA" id="ETARDKW"/>
<dbReference type="OrthoDB" id="3176171at2759"/>
<dbReference type="BioCyc" id="YEAST:G3O-34276-MONOMER"/>
<dbReference type="BRENDA" id="5.6.1.4">
    <property type="organism ID" value="984"/>
</dbReference>
<dbReference type="BioGRID-ORCS" id="856263">
    <property type="hits" value="1 hit in 10 CRISPR screens"/>
</dbReference>
<dbReference type="CD-CODE" id="876000F7">
    <property type="entry name" value="Centrosome"/>
</dbReference>
<dbReference type="EvolutionaryTrace" id="P17119"/>
<dbReference type="PRO" id="PR:P17119"/>
<dbReference type="Proteomes" id="UP000002311">
    <property type="component" value="Chromosome XVI"/>
</dbReference>
<dbReference type="RNAct" id="P17119">
    <property type="molecule type" value="protein"/>
</dbReference>
<dbReference type="GO" id="GO:0005694">
    <property type="term" value="C:chromosome"/>
    <property type="evidence" value="ECO:0007669"/>
    <property type="project" value="UniProtKB-SubCell"/>
</dbReference>
<dbReference type="GO" id="GO:0005881">
    <property type="term" value="C:cytoplasmic microtubule"/>
    <property type="evidence" value="ECO:0000314"/>
    <property type="project" value="SGD"/>
</dbReference>
<dbReference type="GO" id="GO:0005874">
    <property type="term" value="C:microtubule"/>
    <property type="evidence" value="ECO:0007005"/>
    <property type="project" value="SGD"/>
</dbReference>
<dbReference type="GO" id="GO:0015630">
    <property type="term" value="C:microtubule cytoskeleton"/>
    <property type="evidence" value="ECO:0000318"/>
    <property type="project" value="GO_Central"/>
</dbReference>
<dbReference type="GO" id="GO:0005634">
    <property type="term" value="C:nucleus"/>
    <property type="evidence" value="ECO:0007005"/>
    <property type="project" value="SGD"/>
</dbReference>
<dbReference type="GO" id="GO:0000922">
    <property type="term" value="C:spindle pole"/>
    <property type="evidence" value="ECO:0007005"/>
    <property type="project" value="SGD"/>
</dbReference>
<dbReference type="GO" id="GO:0005816">
    <property type="term" value="C:spindle pole body"/>
    <property type="evidence" value="ECO:0000314"/>
    <property type="project" value="SGD"/>
</dbReference>
<dbReference type="GO" id="GO:0005524">
    <property type="term" value="F:ATP binding"/>
    <property type="evidence" value="ECO:0007669"/>
    <property type="project" value="UniProtKB-KW"/>
</dbReference>
<dbReference type="GO" id="GO:0016887">
    <property type="term" value="F:ATP hydrolysis activity"/>
    <property type="evidence" value="ECO:0000314"/>
    <property type="project" value="UniProtKB"/>
</dbReference>
<dbReference type="GO" id="GO:0008017">
    <property type="term" value="F:microtubule binding"/>
    <property type="evidence" value="ECO:0000314"/>
    <property type="project" value="UniProtKB"/>
</dbReference>
<dbReference type="GO" id="GO:0008569">
    <property type="term" value="F:minus-end-directed microtubule motor activity"/>
    <property type="evidence" value="ECO:0000314"/>
    <property type="project" value="UniProtKB"/>
</dbReference>
<dbReference type="GO" id="GO:0051301">
    <property type="term" value="P:cell division"/>
    <property type="evidence" value="ECO:0007669"/>
    <property type="project" value="UniProtKB-KW"/>
</dbReference>
<dbReference type="GO" id="GO:0036503">
    <property type="term" value="P:ERAD pathway"/>
    <property type="evidence" value="ECO:0000315"/>
    <property type="project" value="SGD"/>
</dbReference>
<dbReference type="GO" id="GO:0000742">
    <property type="term" value="P:karyogamy involved in conjugation with cellular fusion"/>
    <property type="evidence" value="ECO:0000315"/>
    <property type="project" value="SGD"/>
</dbReference>
<dbReference type="GO" id="GO:0051321">
    <property type="term" value="P:meiotic cell cycle"/>
    <property type="evidence" value="ECO:0000314"/>
    <property type="project" value="SGD"/>
</dbReference>
<dbReference type="GO" id="GO:0007017">
    <property type="term" value="P:microtubule-based process"/>
    <property type="evidence" value="ECO:0000318"/>
    <property type="project" value="GO_Central"/>
</dbReference>
<dbReference type="GO" id="GO:0000278">
    <property type="term" value="P:mitotic cell cycle"/>
    <property type="evidence" value="ECO:0000315"/>
    <property type="project" value="SGD"/>
</dbReference>
<dbReference type="GO" id="GO:0007064">
    <property type="term" value="P:mitotic sister chromatid cohesion"/>
    <property type="evidence" value="ECO:0000315"/>
    <property type="project" value="SGD"/>
</dbReference>
<dbReference type="GO" id="GO:0051256">
    <property type="term" value="P:mitotic spindle midzone assembly"/>
    <property type="evidence" value="ECO:0000314"/>
    <property type="project" value="UniProtKB"/>
</dbReference>
<dbReference type="GO" id="GO:0000743">
    <property type="term" value="P:nuclear migration involved in conjugation with cellular fusion"/>
    <property type="evidence" value="ECO:0000315"/>
    <property type="project" value="SGD"/>
</dbReference>
<dbReference type="GO" id="GO:1990976">
    <property type="term" value="P:protein transport along microtubule to mitotic spindle pole body"/>
    <property type="evidence" value="ECO:0000315"/>
    <property type="project" value="UniProtKB"/>
</dbReference>
<dbReference type="GO" id="GO:0060236">
    <property type="term" value="P:regulation of mitotic spindle organization"/>
    <property type="evidence" value="ECO:0000315"/>
    <property type="project" value="SGD"/>
</dbReference>
<dbReference type="CDD" id="cd01366">
    <property type="entry name" value="KISc_C_terminal"/>
    <property type="match status" value="1"/>
</dbReference>
<dbReference type="FunFam" id="3.40.850.10:FF:000106">
    <property type="entry name" value="Kinesin-like protein KAR3"/>
    <property type="match status" value="1"/>
</dbReference>
<dbReference type="Gene3D" id="3.40.850.10">
    <property type="entry name" value="Kinesin motor domain"/>
    <property type="match status" value="1"/>
</dbReference>
<dbReference type="InterPro" id="IPR027640">
    <property type="entry name" value="Kinesin-like_fam"/>
</dbReference>
<dbReference type="InterPro" id="IPR019821">
    <property type="entry name" value="Kinesin_motor_CS"/>
</dbReference>
<dbReference type="InterPro" id="IPR001752">
    <property type="entry name" value="Kinesin_motor_dom"/>
</dbReference>
<dbReference type="InterPro" id="IPR036961">
    <property type="entry name" value="Kinesin_motor_dom_sf"/>
</dbReference>
<dbReference type="InterPro" id="IPR027417">
    <property type="entry name" value="P-loop_NTPase"/>
</dbReference>
<dbReference type="PANTHER" id="PTHR47972">
    <property type="entry name" value="KINESIN-LIKE PROTEIN KLP-3"/>
    <property type="match status" value="1"/>
</dbReference>
<dbReference type="PANTHER" id="PTHR47972:SF28">
    <property type="entry name" value="KINESIN-LIKE PROTEIN KLP-3"/>
    <property type="match status" value="1"/>
</dbReference>
<dbReference type="Pfam" id="PF00225">
    <property type="entry name" value="Kinesin"/>
    <property type="match status" value="1"/>
</dbReference>
<dbReference type="PRINTS" id="PR00380">
    <property type="entry name" value="KINESINHEAVY"/>
</dbReference>
<dbReference type="SMART" id="SM00129">
    <property type="entry name" value="KISc"/>
    <property type="match status" value="1"/>
</dbReference>
<dbReference type="SUPFAM" id="SSF52540">
    <property type="entry name" value="P-loop containing nucleoside triphosphate hydrolases"/>
    <property type="match status" value="1"/>
</dbReference>
<dbReference type="PROSITE" id="PS00411">
    <property type="entry name" value="KINESIN_MOTOR_1"/>
    <property type="match status" value="1"/>
</dbReference>
<dbReference type="PROSITE" id="PS50067">
    <property type="entry name" value="KINESIN_MOTOR_2"/>
    <property type="match status" value="1"/>
</dbReference>
<gene>
    <name type="primary">KAR3</name>
    <name type="ordered locus">YPR141C</name>
    <name type="ORF">P9659.16</name>
</gene>
<comment type="function">
    <text evidence="4 5 6 8 9 10 11 12 13 14 15 16 17 18 20">Minus end-directed microtubule (MT) motor involved in spindle midzone assembly, poleward transport of newly captured kinetochores along the lateral side of MTs, karyogamy (nuclear fusion) during mating, and with an essential function in meiosis I (PubMed:11387196, PubMed:11729143, PubMed:17382884, PubMed:17620411, PubMed:22734002, PubMed:25313961, PubMed:7912193, PubMed:8106549, PubMed:9334348, PubMed:9859995). Functions together with the accessory proteins CIK1 or VIK1 (PubMed:10087265, PubMed:11729143, PubMed:15846338, PubMed:17382884, PubMed:22734002, PubMed:25313961). Drives the poleward transport of newly captured kinetochores along the lateral side of MTs, both during S-phase and during M-phase (PubMed:15846338, PubMed:17620411, PubMed:18079178). To contribute to spindle midzone assembly during mitotic metaphase, the nuclear KAR3-CIK1 motor cross-links anti-parallel microtubules to align them on the spindle axis; as the motor travels polewards splayed microtubules are pulled into alignment (PubMed:25313961). During the karyogamy (nuclear fusion) step of mating, KAR3-CIK1 cross-links antiparallel cytoplasmic microtubules emanating from the spindle pole bodies of mating partners; the motor activity of KAR3 creates the force that pulls the nuclei together by sliding cross-linked microtubules past one another (PubMed:2138512, PubMed:8106549). KAR3-CIK1 promotes microtubule shortening predominantly from the microtubule plus-end (PubMed:17382884). Together with cytoplasmic VIK1, may act to stabilize microtubules (PubMed:17382884). Requires accessory protein VIK1 for spindle pole body localization and to allow the CIN8 and KIP1 motors to generate outwardly directed spindle forces (PubMed:11729143, PubMed:2138512, PubMed:7912193, PubMed:8224825). Essential during meiosis I (PubMed:9334348). The ATPase activity is stimulated by microtubule-binding (PubMed:11387196, PubMed:22734002, PubMed:9859995).</text>
</comment>
<comment type="catalytic activity">
    <reaction evidence="5 9 13 20">
        <text>ATP + H2O = ADP + phosphate + H(+)</text>
        <dbReference type="Rhea" id="RHEA:13065"/>
        <dbReference type="ChEBI" id="CHEBI:15377"/>
        <dbReference type="ChEBI" id="CHEBI:15378"/>
        <dbReference type="ChEBI" id="CHEBI:30616"/>
        <dbReference type="ChEBI" id="CHEBI:43474"/>
        <dbReference type="ChEBI" id="CHEBI:456216"/>
    </reaction>
    <physiologicalReaction direction="left-to-right" evidence="5 9 13 20">
        <dbReference type="Rhea" id="RHEA:13066"/>
    </physiologicalReaction>
</comment>
<comment type="catalytic activity">
    <reaction evidence="9 13 14 21 22">
        <text>ATP + H2O + a kinesin associated with a microtubule at position (n) = ADP + phosphate + a kinesin associated with a microtubule at position (n-1, toward the minus end).</text>
        <dbReference type="EC" id="5.6.1.4"/>
    </reaction>
</comment>
<comment type="biophysicochemical properties">
    <kinetics>
        <KM evidence="9">12.2 uM for MgATP</KM>
        <KM evidence="9">18.6 uM for MgATP in complex with CIK1</KM>
        <KM evidence="9">15 uM for MgATP in complex with VIK1</KM>
        <text evidence="9">kcat is 0.49 sec(-1) with MgATP as substrate (PubMed:17382884). kcat is 2.8 sec(-1) with MgATP as substrate in complex with CIK1 (PubMed:17382884). kcat is 3.7 sec(-1) with MgATP as substrate in complex with VIK1 (PubMed:17382884).</text>
    </kinetics>
</comment>
<comment type="subunit">
    <text evidence="4 9 16">Interacts with CIK1; the interaction is direct (PubMed:10087265, PubMed:17382884, PubMed:8106549). Interacts with VIK1; the interaction is direct (PubMed:10087265, PubMed:17382884).</text>
</comment>
<comment type="interaction">
    <interactant intactId="EBI-9499">
        <id>P17119</id>
    </interactant>
    <interactant intactId="EBI-17402">
        <id>P32908</id>
        <label>SMC1</label>
    </interactant>
    <organismsDiffer>false</organismsDiffer>
    <experiments>4</experiments>
</comment>
<comment type="interaction">
    <interactant intactId="EBI-9499">
        <id>P17119</id>
    </interactant>
    <interactant intactId="EBI-38784">
        <id>Q12045</id>
        <label>VIK1</label>
    </interactant>
    <organismsDiffer>false</organismsDiffer>
    <experiments>4</experiments>
</comment>
<comment type="subcellular location">
    <subcellularLocation>
        <location evidence="4 6 14">Cytoplasm</location>
        <location evidence="4 6 14">Cytoskeleton</location>
        <location evidence="4 6 14">Microtubule organizing center</location>
        <location evidence="4 6 14">Spindle pole body</location>
    </subcellularLocation>
    <subcellularLocation>
        <location evidence="6 10">Nucleus</location>
    </subcellularLocation>
    <subcellularLocation>
        <location evidence="6 9 10 14">Cytoplasm</location>
        <location evidence="6 9 10 14">Cytoskeleton</location>
    </subcellularLocation>
    <subcellularLocation>
        <location evidence="8">Chromosome</location>
    </subcellularLocation>
    <subcellularLocation>
        <location evidence="10 14">Cytoplasm</location>
        <location evidence="10 14">Cytoskeleton</location>
        <location evidence="10 14">Spindle</location>
    </subcellularLocation>
    <text evidence="12">Cytoplasmic microtubules.</text>
</comment>
<comment type="induction">
    <text>By alpha factor.</text>
</comment>
<comment type="disruption phenotype">
    <text evidence="8 10 14 16 18">Short mitotic metaphase spindles with splayed microtubules (MTs) increasing spindle width (PubMed:25313961). Disrupts the poleward movement of kinetochores on MTs; abolishes poleward sliding along the lateral side of MTs and increases end-on pulling (PubMed:15846338, PubMed:17620411). During karyogamy, (the mating step where nuclei fuse), abolishes the formation of a MT bridge between the two nuclei thereby leading to a failure in nuclear fusion (PubMed:8106549). Abnormal meiosis I; cells do not progress past prophase I, interhomolog recombination is abnormal and the organization of MTs is abnormal (PubMed:9334348).</text>
</comment>
<comment type="miscellaneous">
    <text>KAR3 contains two globular domains separated by an alpha-helical coiled coil. The N-terminal portion of KAR3 contains a microtubule association domain distinct from the kinesin-like C-terminal domain.</text>
</comment>
<comment type="miscellaneous">
    <text evidence="7">Present with 3250 molecules/cell in log phase SD medium.</text>
</comment>
<comment type="similarity">
    <text evidence="2">Belongs to the TRAFAC class myosin-kinesin ATPase superfamily. Kinesin family. NCD subfamily.</text>
</comment>
<reference key="1">
    <citation type="journal article" date="1990" name="Cell">
        <title>KAR3, a kinesin-related gene required for yeast nuclear fusion.</title>
        <authorList>
            <person name="Meluh P.B."/>
            <person name="Rose M.D."/>
        </authorList>
    </citation>
    <scope>NUCLEOTIDE SEQUENCE [MRNA]</scope>
    <scope>FUNCTION</scope>
    <scope>SUBCELLULAR LOCATION</scope>
    <source>
        <strain>MY1124</strain>
    </source>
</reference>
<reference key="2">
    <citation type="journal article" date="1997" name="Nature">
        <title>The nucleotide sequence of Saccharomyces cerevisiae chromosome XVI.</title>
        <authorList>
            <person name="Bussey H."/>
            <person name="Storms R.K."/>
            <person name="Ahmed A."/>
            <person name="Albermann K."/>
            <person name="Allen E."/>
            <person name="Ansorge W."/>
            <person name="Araujo R."/>
            <person name="Aparicio A."/>
            <person name="Barrell B.G."/>
            <person name="Badcock K."/>
            <person name="Benes V."/>
            <person name="Botstein D."/>
            <person name="Bowman S."/>
            <person name="Brueckner M."/>
            <person name="Carpenter J."/>
            <person name="Cherry J.M."/>
            <person name="Chung E."/>
            <person name="Churcher C.M."/>
            <person name="Coster F."/>
            <person name="Davis K."/>
            <person name="Davis R.W."/>
            <person name="Dietrich F.S."/>
            <person name="Delius H."/>
            <person name="DiPaolo T."/>
            <person name="Dubois E."/>
            <person name="Duesterhoeft A."/>
            <person name="Duncan M."/>
            <person name="Floeth M."/>
            <person name="Fortin N."/>
            <person name="Friesen J.D."/>
            <person name="Fritz C."/>
            <person name="Goffeau A."/>
            <person name="Hall J."/>
            <person name="Hebling U."/>
            <person name="Heumann K."/>
            <person name="Hilbert H."/>
            <person name="Hillier L.W."/>
            <person name="Hunicke-Smith S."/>
            <person name="Hyman R.W."/>
            <person name="Johnston M."/>
            <person name="Kalman S."/>
            <person name="Kleine K."/>
            <person name="Komp C."/>
            <person name="Kurdi O."/>
            <person name="Lashkari D."/>
            <person name="Lew H."/>
            <person name="Lin A."/>
            <person name="Lin D."/>
            <person name="Louis E.J."/>
            <person name="Marathe R."/>
            <person name="Messenguy F."/>
            <person name="Mewes H.-W."/>
            <person name="Mirtipati S."/>
            <person name="Moestl D."/>
            <person name="Mueller-Auer S."/>
            <person name="Namath A."/>
            <person name="Nentwich U."/>
            <person name="Oefner P."/>
            <person name="Pearson D."/>
            <person name="Petel F.X."/>
            <person name="Pohl T.M."/>
            <person name="Purnelle B."/>
            <person name="Rajandream M.A."/>
            <person name="Rechmann S."/>
            <person name="Rieger M."/>
            <person name="Riles L."/>
            <person name="Roberts D."/>
            <person name="Schaefer M."/>
            <person name="Scharfe M."/>
            <person name="Scherens B."/>
            <person name="Schramm S."/>
            <person name="Schroeder M."/>
            <person name="Sdicu A.-M."/>
            <person name="Tettelin H."/>
            <person name="Urrestarazu L.A."/>
            <person name="Ushinsky S."/>
            <person name="Vierendeels F."/>
            <person name="Vissers S."/>
            <person name="Voss H."/>
            <person name="Walsh S.V."/>
            <person name="Wambutt R."/>
            <person name="Wang Y."/>
            <person name="Wedler E."/>
            <person name="Wedler H."/>
            <person name="Winnett E."/>
            <person name="Zhong W.-W."/>
            <person name="Zollner A."/>
            <person name="Vo D.H."/>
            <person name="Hani J."/>
        </authorList>
    </citation>
    <scope>NUCLEOTIDE SEQUENCE [LARGE SCALE GENOMIC DNA]</scope>
    <source>
        <strain>ATCC 204508 / S288c</strain>
    </source>
</reference>
<reference key="3">
    <citation type="journal article" date="2014" name="G3 (Bethesda)">
        <title>The reference genome sequence of Saccharomyces cerevisiae: Then and now.</title>
        <authorList>
            <person name="Engel S.R."/>
            <person name="Dietrich F.S."/>
            <person name="Fisk D.G."/>
            <person name="Binkley G."/>
            <person name="Balakrishnan R."/>
            <person name="Costanzo M.C."/>
            <person name="Dwight S.S."/>
            <person name="Hitz B.C."/>
            <person name="Karra K."/>
            <person name="Nash R.S."/>
            <person name="Weng S."/>
            <person name="Wong E.D."/>
            <person name="Lloyd P."/>
            <person name="Skrzypek M.S."/>
            <person name="Miyasato S.R."/>
            <person name="Simison M."/>
            <person name="Cherry J.M."/>
        </authorList>
    </citation>
    <scope>GENOME REANNOTATION</scope>
    <source>
        <strain>ATCC 204508 / S288c</strain>
    </source>
</reference>
<reference key="4">
    <citation type="journal article" date="1993" name="Genetics">
        <title>Loss of function of Saccharomyces cerevisiae kinesin-related CIN8 and KIP1 is suppressed by KAR3 motor domain mutations.</title>
        <authorList>
            <person name="Hoyt M.A."/>
            <person name="He L."/>
            <person name="Totis L."/>
            <person name="Saunders W.S."/>
        </authorList>
    </citation>
    <scope>FUNCTION</scope>
</reference>
<reference key="5">
    <citation type="journal article" date="1994" name="EMBO J.">
        <title>Yeast Kar3 is a minus-end microtubule motor protein that destabilizes microtubules preferentially at the minus ends.</title>
        <authorList>
            <person name="Endow S.A."/>
            <person name="Kang S.J."/>
            <person name="Satterwhite L.L."/>
            <person name="Rose M.D."/>
            <person name="Skeen V.P."/>
            <person name="Salmon E.D."/>
        </authorList>
    </citation>
    <scope>FUNCTION</scope>
</reference>
<reference key="6">
    <citation type="journal article" date="1994" name="J. Cell Biol.">
        <title>Localization of the Kar3 kinesin heavy chain-related protein requires the Cik1 interacting protein.</title>
        <authorList>
            <person name="Page B.D."/>
            <person name="Satterwhite L.L."/>
            <person name="Rose M.D."/>
            <person name="Snyder M."/>
        </authorList>
    </citation>
    <scope>FUNCTION</scope>
    <scope>INTERACTION WITH CIK1</scope>
    <scope>DISRUPTION PHENOTYPE</scope>
</reference>
<reference key="7">
    <citation type="journal article" date="1997" name="J. Cell Biol.">
        <title>The yeast motor protein, Kar3p, is essential for meiosis I.</title>
        <authorList>
            <person name="Bascom-Slack C.A."/>
            <person name="Dawson D.S."/>
        </authorList>
    </citation>
    <scope>FUNCTION</scope>
    <scope>DISRUPTION PHENOTYPE</scope>
</reference>
<reference key="8">
    <citation type="journal article" date="1998" name="Nature">
        <title>Decoupling of nucleotide- and microtubule-binding sites in a kinesin mutant.</title>
        <authorList>
            <person name="Song H."/>
            <person name="Endow S.A."/>
        </authorList>
    </citation>
    <scope>FUNCTION</scope>
    <scope>CATALYTIC ACTIVITY</scope>
    <scope>MUTAGENESIS OF ASN-650</scope>
</reference>
<reference key="9">
    <citation type="journal article" date="1999" name="J. Cell Biol.">
        <title>Differential regulation of the Kar3p kinesin-related protein by two associated proteins, Cik1p and Vik1p.</title>
        <authorList>
            <person name="Manning B.D."/>
            <person name="Barrett J.G."/>
            <person name="Wallace J.A."/>
            <person name="Granok H."/>
            <person name="Snyder M."/>
        </authorList>
    </citation>
    <scope>FUNCTION</scope>
    <scope>INTERACTION WITH CIK1 AND VIK1</scope>
    <scope>SUBCELLULAR LOCATION</scope>
</reference>
<reference key="10">
    <citation type="journal article" date="2001" name="Genetics">
        <title>The Kar3-interacting protein Cik1p plays a critical role in passage through meiosis I in Saccharomyces cerevisiae.</title>
        <authorList>
            <person name="Shanks R.M.Q."/>
            <person name="Kamieniecki R.J."/>
            <person name="Dawson D.S."/>
        </authorList>
    </citation>
    <scope>FUNCTION</scope>
    <scope>SUBCELLULAR LOCATION</scope>
</reference>
<reference key="11">
    <citation type="journal article" date="2003" name="Nature">
        <title>Global analysis of protein expression in yeast.</title>
        <authorList>
            <person name="Ghaemmaghami S."/>
            <person name="Huh W.-K."/>
            <person name="Bower K."/>
            <person name="Howson R.W."/>
            <person name="Belle A."/>
            <person name="Dephoure N."/>
            <person name="O'Shea E.K."/>
            <person name="Weissman J.S."/>
        </authorList>
    </citation>
    <scope>LEVEL OF PROTEIN EXPRESSION [LARGE SCALE ANALYSIS]</scope>
</reference>
<reference key="12">
    <citation type="journal article" date="2007" name="Cell">
        <title>Vik1 modulates microtubule-Kar3 interactions through a motor domain that lacks an active site.</title>
        <authorList>
            <person name="Allingham J.S."/>
            <person name="Sproul L.R."/>
            <person name="Rayment I."/>
            <person name="Gilbert S.P."/>
        </authorList>
    </citation>
    <scope>FUNCTION</scope>
    <scope>CATALYTIC ACTIVITY</scope>
    <scope>BIOPHYSICOCHEMICAL PROPERTIES</scope>
    <scope>INTERACTION WITH VIK1 AND CIK1</scope>
    <scope>SUBCELLULAR LOCATION</scope>
</reference>
<reference key="13">
    <citation type="journal article" date="2007" name="Genes Dev.">
        <title>Kinetochore microtubule interaction during S phase in Saccharomyces cerevisiae.</title>
        <authorList>
            <person name="Kitamura E."/>
            <person name="Tanaka K."/>
            <person name="Kitamura Y."/>
            <person name="Tanaka T.U."/>
        </authorList>
    </citation>
    <scope>FUNCTION</scope>
</reference>
<reference key="14">
    <citation type="journal article" date="2005" name="Nature">
        <title>Molecular mechanisms of kinetochore capture by spindle microtubules.</title>
        <authorList>
            <person name="Tanaka K."/>
            <person name="Mukae N."/>
            <person name="Dewar H."/>
            <person name="van Breugel M."/>
            <person name="James E.K."/>
            <person name="Prescott A.R."/>
            <person name="Antony C."/>
            <person name="Tanaka T.U."/>
        </authorList>
    </citation>
    <scope>FUNCTION</scope>
    <scope>SUBCELLULAR LOCATION</scope>
    <scope>DISRUPTION PHENOTYPE</scope>
</reference>
<reference key="15">
    <citation type="journal article" date="2007" name="J. Cell Biol.">
        <title>Molecular mechanisms of microtubule-dependent kinetochore transport toward spindle poles.</title>
        <authorList>
            <person name="Tanaka K."/>
            <person name="Kitamura E."/>
            <person name="Kitamura Y."/>
            <person name="Tanaka T.U."/>
        </authorList>
    </citation>
    <scope>FUNCTION</scope>
    <scope>SUBCELLULAR LOCATION</scope>
    <scope>DISRUPTION PHENOTYPE</scope>
</reference>
<reference key="16">
    <citation type="journal article" date="2014" name="Dev. Cell">
        <title>Minus-end-directed Kinesin-14 motors align antiparallel microtubules to control metaphase spindle length.</title>
        <authorList>
            <person name="Hepperla A.J."/>
            <person name="Willey P.T."/>
            <person name="Coombes C.E."/>
            <person name="Schuster B.M."/>
            <person name="Gerami-Nejad M."/>
            <person name="McClellan M."/>
            <person name="Mukherjee S."/>
            <person name="Fox J."/>
            <person name="Winey M."/>
            <person name="Odde D.J."/>
            <person name="O'Toole E."/>
            <person name="Gardner M.K."/>
        </authorList>
    </citation>
    <scope>FUNCTION</scope>
    <scope>CATALYTIC ACTIVITY</scope>
    <scope>SUBCELLULAR LOCATION</scope>
    <scope>DISRUPTION PHENOTYPE</scope>
</reference>
<reference evidence="27" key="17">
    <citation type="journal article" date="1998" name="Biochemistry">
        <title>X-ray crystal structure of the yeast Kar3 motor domain complexed with Mg.ADP to 2.3-A resolution.</title>
        <authorList>
            <person name="Gulick A.M."/>
            <person name="Song H."/>
            <person name="Endow S.A."/>
            <person name="Rayment I."/>
        </authorList>
    </citation>
    <scope>X-RAY CRYSTALLOGRAPHY (2.3 ANGSTROMS) OF 383-729 IN COMPLEX WITH ADP</scope>
    <scope>ATP-BINDING</scope>
</reference>
<reference evidence="23 24 25 26" key="18">
    <citation type="journal article" date="2001" name="EMBO J.">
        <title>A structural pathway for activation of the kinesin motor ATPase.</title>
        <authorList>
            <person name="Yun M."/>
            <person name="Zhang X."/>
            <person name="Park C.G."/>
            <person name="Park H.W."/>
            <person name="Endow S.A."/>
        </authorList>
    </citation>
    <scope>X-RAY CRYSTALLOGRAPHY (1.30 ANGSTROMS) OF 384-729 IN COMPLEX WITH ADP</scope>
    <scope>FUNCTION</scope>
    <scope>CATALYTIC ACTIVITY</scope>
    <scope>ATP-BINDING</scope>
    <scope>MUTAGENESIS OF ARG-598; GLU-631 AND ARG-632</scope>
</reference>
<reference evidence="28" key="19">
    <citation type="journal article" date="2012" name="J. Cell Biol.">
        <title>Kar3Vik1, a member of the kinesin-14 superfamily, shows a novel kinesin microtubule binding pattern.</title>
        <authorList>
            <person name="Rank K.C."/>
            <person name="Chen C.J."/>
            <person name="Cope J."/>
            <person name="Porche K."/>
            <person name="Hoenger A."/>
            <person name="Gilbert S.P."/>
            <person name="Rayment I."/>
        </authorList>
    </citation>
    <scope>X-RAY CRYSTALLOGRAPHY (2.30 ANGSTROMS) OF 331-729 IN COMPLEX WITH VIK1 AND ADP</scope>
    <scope>FUNCTION</scope>
    <scope>CATALYTIC ACTIVITY</scope>
    <scope>ATP-BINDING</scope>
</reference>
<accession>P17119</accession>
<accession>D6W4D9</accession>
<name>KAR3_YEAST</name>
<keyword id="KW-0002">3D-structure</keyword>
<keyword id="KW-0067">ATP-binding</keyword>
<keyword id="KW-0131">Cell cycle</keyword>
<keyword id="KW-0132">Cell division</keyword>
<keyword id="KW-0158">Chromosome</keyword>
<keyword id="KW-0175">Coiled coil</keyword>
<keyword id="KW-0963">Cytoplasm</keyword>
<keyword id="KW-0206">Cytoskeleton</keyword>
<keyword id="KW-0413">Isomerase</keyword>
<keyword id="KW-0415">Karyogamy</keyword>
<keyword id="KW-0493">Microtubule</keyword>
<keyword id="KW-0505">Motor protein</keyword>
<keyword id="KW-0547">Nucleotide-binding</keyword>
<keyword id="KW-0539">Nucleus</keyword>
<keyword id="KW-1185">Reference proteome</keyword>
<protein>
    <recommendedName>
        <fullName>Kinesin-like protein KAR3</fullName>
        <ecNumber evidence="9 13 14 21 22">5.6.1.4</ecNumber>
    </recommendedName>
    <alternativeName>
        <fullName>Nuclear fusion protein</fullName>
    </alternativeName>
</protein>
<evidence type="ECO:0000255" key="1"/>
<evidence type="ECO:0000255" key="2">
    <source>
        <dbReference type="PROSITE-ProRule" id="PRU00283"/>
    </source>
</evidence>
<evidence type="ECO:0000256" key="3">
    <source>
        <dbReference type="SAM" id="MobiDB-lite"/>
    </source>
</evidence>
<evidence type="ECO:0000269" key="4">
    <source>
    </source>
</evidence>
<evidence type="ECO:0000269" key="5">
    <source>
    </source>
</evidence>
<evidence type="ECO:0000269" key="6">
    <source>
    </source>
</evidence>
<evidence type="ECO:0000269" key="7">
    <source>
    </source>
</evidence>
<evidence type="ECO:0000269" key="8">
    <source>
    </source>
</evidence>
<evidence type="ECO:0000269" key="9">
    <source>
    </source>
</evidence>
<evidence type="ECO:0000269" key="10">
    <source>
    </source>
</evidence>
<evidence type="ECO:0000269" key="11">
    <source>
    </source>
</evidence>
<evidence type="ECO:0000269" key="12">
    <source>
    </source>
</evidence>
<evidence type="ECO:0000269" key="13">
    <source>
    </source>
</evidence>
<evidence type="ECO:0000269" key="14">
    <source>
    </source>
</evidence>
<evidence type="ECO:0000269" key="15">
    <source>
    </source>
</evidence>
<evidence type="ECO:0000269" key="16">
    <source>
    </source>
</evidence>
<evidence type="ECO:0000269" key="17">
    <source>
    </source>
</evidence>
<evidence type="ECO:0000269" key="18">
    <source>
    </source>
</evidence>
<evidence type="ECO:0000269" key="19">
    <source>
    </source>
</evidence>
<evidence type="ECO:0000269" key="20">
    <source>
    </source>
</evidence>
<evidence type="ECO:0000305" key="21">
    <source>
    </source>
</evidence>
<evidence type="ECO:0000305" key="22">
    <source>
    </source>
</evidence>
<evidence type="ECO:0007744" key="23">
    <source>
        <dbReference type="PDB" id="1F9T"/>
    </source>
</evidence>
<evidence type="ECO:0007744" key="24">
    <source>
        <dbReference type="PDB" id="1F9U"/>
    </source>
</evidence>
<evidence type="ECO:0007744" key="25">
    <source>
        <dbReference type="PDB" id="1F9V"/>
    </source>
</evidence>
<evidence type="ECO:0007744" key="26">
    <source>
        <dbReference type="PDB" id="1F9W"/>
    </source>
</evidence>
<evidence type="ECO:0007744" key="27">
    <source>
        <dbReference type="PDB" id="3KAR"/>
    </source>
</evidence>
<evidence type="ECO:0007744" key="28">
    <source>
        <dbReference type="PDB" id="4ETP"/>
    </source>
</evidence>
<evidence type="ECO:0007829" key="29">
    <source>
        <dbReference type="PDB" id="1F9U"/>
    </source>
</evidence>
<evidence type="ECO:0007829" key="30">
    <source>
        <dbReference type="PDB" id="1F9V"/>
    </source>
</evidence>
<evidence type="ECO:0007829" key="31">
    <source>
        <dbReference type="PDB" id="3KAR"/>
    </source>
</evidence>
<evidence type="ECO:0007829" key="32">
    <source>
        <dbReference type="PDB" id="4ETP"/>
    </source>
</evidence>
<feature type="chain" id="PRO_0000125391" description="Kinesin-like protein KAR3">
    <location>
        <begin position="1"/>
        <end position="729"/>
    </location>
</feature>
<feature type="domain" description="Kinesin motor" evidence="2">
    <location>
        <begin position="386"/>
        <end position="723"/>
    </location>
</feature>
<feature type="region of interest" description="Globular">
    <location>
        <begin position="1"/>
        <end position="109"/>
    </location>
</feature>
<feature type="region of interest" description="Disordered" evidence="3">
    <location>
        <begin position="1"/>
        <end position="48"/>
    </location>
</feature>
<feature type="coiled-coil region" evidence="1">
    <location>
        <begin position="110"/>
        <end position="357"/>
    </location>
</feature>
<feature type="compositionally biased region" description="Polar residues" evidence="3">
    <location>
        <begin position="10"/>
        <end position="22"/>
    </location>
</feature>
<feature type="binding site" evidence="5 25">
    <location>
        <position position="386"/>
    </location>
    <ligand>
        <name>ATP</name>
        <dbReference type="ChEBI" id="CHEBI:30616"/>
    </ligand>
</feature>
<feature type="binding site" evidence="5 25">
    <location>
        <position position="388"/>
    </location>
    <ligand>
        <name>ATP</name>
        <dbReference type="ChEBI" id="CHEBI:30616"/>
    </ligand>
</feature>
<feature type="binding site" evidence="5 13 19 23 24 25 26 27 28">
    <location>
        <position position="392"/>
    </location>
    <ligand>
        <name>ATP</name>
        <dbReference type="ChEBI" id="CHEBI:30616"/>
    </ligand>
</feature>
<feature type="binding site" evidence="5 25">
    <location>
        <position position="454"/>
    </location>
    <ligand>
        <name>ATP</name>
        <dbReference type="ChEBI" id="CHEBI:30616"/>
    </ligand>
</feature>
<feature type="binding site" evidence="5 13 19 23 24 25 26 27 28">
    <location>
        <position position="477"/>
    </location>
    <ligand>
        <name>ATP</name>
        <dbReference type="ChEBI" id="CHEBI:30616"/>
    </ligand>
</feature>
<feature type="binding site" evidence="5 26">
    <location>
        <position position="478"/>
    </location>
    <ligand>
        <name>ATP</name>
        <dbReference type="ChEBI" id="CHEBI:30616"/>
    </ligand>
</feature>
<feature type="binding site" evidence="5 13 19 23 24 25 26 27 28">
    <location>
        <position position="479"/>
    </location>
    <ligand>
        <name>ATP</name>
        <dbReference type="ChEBI" id="CHEBI:30616"/>
    </ligand>
</feature>
<feature type="binding site" evidence="5 13 19 23 24 25 26 27 28">
    <location>
        <position position="480"/>
    </location>
    <ligand>
        <name>ATP</name>
        <dbReference type="ChEBI" id="CHEBI:30616"/>
    </ligand>
</feature>
<feature type="binding site" evidence="5 13 19 23 24 25 26 27 28">
    <location>
        <position position="481"/>
    </location>
    <ligand>
        <name>ATP</name>
        <dbReference type="ChEBI" id="CHEBI:30616"/>
    </ligand>
</feature>
<feature type="binding site" evidence="5 13 19 23 24 25 26 27 28">
    <location>
        <position position="482"/>
    </location>
    <ligand>
        <name>ATP</name>
        <dbReference type="ChEBI" id="CHEBI:30616"/>
    </ligand>
</feature>
<feature type="binding site" evidence="13 28">
    <location>
        <position position="554"/>
    </location>
    <ligand>
        <name>ATP</name>
        <dbReference type="ChEBI" id="CHEBI:30616"/>
    </ligand>
</feature>
<feature type="binding site" evidence="5 25">
    <location>
        <position position="579"/>
    </location>
    <ligand>
        <name>ATP</name>
        <dbReference type="ChEBI" id="CHEBI:30616"/>
    </ligand>
</feature>
<feature type="binding site" evidence="5 25">
    <location>
        <position position="694"/>
    </location>
    <ligand>
        <name>ATP</name>
        <dbReference type="ChEBI" id="CHEBI:30616"/>
    </ligand>
</feature>
<feature type="sequence variant" description="In KAR3-894.">
    <original>N</original>
    <variation>K</variation>
    <location>
        <position position="378"/>
    </location>
</feature>
<feature type="sequence variant" description="In KAR3-891.">
    <original>S</original>
    <variation>L</variation>
    <location>
        <position position="462"/>
    </location>
</feature>
<feature type="sequence variant" description="In KAR3-893.">
    <original>E</original>
    <variation>D</variation>
    <location>
        <position position="521"/>
    </location>
</feature>
<feature type="sequence variant" description="In KAR3-899.">
    <original>R</original>
    <variation>S</variation>
    <location>
        <position position="550"/>
    </location>
</feature>
<feature type="sequence variant" description="In KAR3-8912.">
    <original>T</original>
    <variation>A</variation>
    <location>
        <position position="558"/>
    </location>
</feature>
<feature type="sequence variant" description="In KAR3-898.">
    <original>N</original>
    <variation>K</variation>
    <location>
        <position position="650"/>
    </location>
</feature>
<feature type="sequence variant" description="In KAR3-897.">
    <original>V</original>
    <variation>L</variation>
    <location>
        <position position="659"/>
    </location>
</feature>
<feature type="mutagenesis site" description="Poisons nuclear fusion.">
    <original>G</original>
    <variation>E</variation>
    <location>
        <position position="479"/>
    </location>
</feature>
<feature type="mutagenesis site" description="Disrupts microtubule binding. Abolishes microtubule-activated ATPase activity." evidence="5">
    <original>R</original>
    <variation>A</variation>
    <location>
        <position position="598"/>
    </location>
</feature>
<feature type="mutagenesis site" description="Increases strength of microtubule binding. Abolishes microtubule-activated ATPase activity." evidence="5">
    <original>E</original>
    <variation>A</variation>
    <location>
        <position position="631"/>
    </location>
</feature>
<feature type="mutagenesis site" description="Decreases microtubule-activated ATPase activity." evidence="5">
    <original>R</original>
    <variation>A</variation>
    <location>
        <position position="632"/>
    </location>
</feature>
<feature type="mutagenesis site" description="Increases strength of microtubule binding. Prevents release of ADP upon microtubule-binding." evidence="20">
    <original>N</original>
    <variation>K</variation>
    <location>
        <position position="650"/>
    </location>
</feature>
<feature type="helix" evidence="32">
    <location>
        <begin position="331"/>
        <end position="338"/>
    </location>
</feature>
<feature type="helix" evidence="32">
    <location>
        <begin position="340"/>
        <end position="384"/>
    </location>
</feature>
<feature type="strand" evidence="30">
    <location>
        <begin position="386"/>
        <end position="393"/>
    </location>
</feature>
<feature type="turn" evidence="30">
    <location>
        <begin position="398"/>
        <end position="400"/>
    </location>
</feature>
<feature type="strand" evidence="30">
    <location>
        <begin position="406"/>
        <end position="410"/>
    </location>
</feature>
<feature type="turn" evidence="30">
    <location>
        <begin position="415"/>
        <end position="418"/>
    </location>
</feature>
<feature type="strand" evidence="30">
    <location>
        <begin position="419"/>
        <end position="426"/>
    </location>
</feature>
<feature type="helix" evidence="30">
    <location>
        <begin position="427"/>
        <end position="429"/>
    </location>
</feature>
<feature type="strand" evidence="30">
    <location>
        <begin position="433"/>
        <end position="442"/>
    </location>
</feature>
<feature type="helix" evidence="30">
    <location>
        <begin position="448"/>
        <end position="459"/>
    </location>
</feature>
<feature type="helix" evidence="30">
    <location>
        <begin position="460"/>
        <end position="464"/>
    </location>
</feature>
<feature type="strand" evidence="30">
    <location>
        <begin position="468"/>
        <end position="473"/>
    </location>
</feature>
<feature type="helix" evidence="30">
    <location>
        <begin position="480"/>
        <end position="485"/>
    </location>
</feature>
<feature type="turn" evidence="30">
    <location>
        <begin position="487"/>
        <end position="489"/>
    </location>
</feature>
<feature type="helix" evidence="30">
    <location>
        <begin position="491"/>
        <end position="506"/>
    </location>
</feature>
<feature type="helix" evidence="30">
    <location>
        <begin position="507"/>
        <end position="509"/>
    </location>
</feature>
<feature type="strand" evidence="30">
    <location>
        <begin position="512"/>
        <end position="523"/>
    </location>
</feature>
<feature type="strand" evidence="30">
    <location>
        <begin position="526"/>
        <end position="529"/>
    </location>
</feature>
<feature type="strand" evidence="30">
    <location>
        <begin position="549"/>
        <end position="552"/>
    </location>
</feature>
<feature type="turn" evidence="30">
    <location>
        <begin position="553"/>
        <end position="556"/>
    </location>
</feature>
<feature type="strand" evidence="30">
    <location>
        <begin position="557"/>
        <end position="560"/>
    </location>
</feature>
<feature type="strand" evidence="31">
    <location>
        <begin position="566"/>
        <end position="570"/>
    </location>
</feature>
<feature type="helix" evidence="30">
    <location>
        <begin position="571"/>
        <end position="573"/>
    </location>
</feature>
<feature type="helix" evidence="30">
    <location>
        <begin position="574"/>
        <end position="581"/>
    </location>
</feature>
<feature type="helix" evidence="30">
    <location>
        <begin position="596"/>
        <end position="598"/>
    </location>
</feature>
<feature type="strand" evidence="30">
    <location>
        <begin position="599"/>
        <end position="610"/>
    </location>
</feature>
<feature type="turn" evidence="29">
    <location>
        <begin position="612"/>
        <end position="614"/>
    </location>
</feature>
<feature type="strand" evidence="30">
    <location>
        <begin position="617"/>
        <end position="626"/>
    </location>
</feature>
<feature type="helix" evidence="30">
    <location>
        <begin position="635"/>
        <end position="637"/>
    </location>
</feature>
<feature type="helix" evidence="30">
    <location>
        <begin position="640"/>
        <end position="663"/>
    </location>
</feature>
<feature type="turn" evidence="32">
    <location>
        <begin position="668"/>
        <end position="670"/>
    </location>
</feature>
<feature type="helix" evidence="30">
    <location>
        <begin position="675"/>
        <end position="677"/>
    </location>
</feature>
<feature type="helix" evidence="30">
    <location>
        <begin position="679"/>
        <end position="688"/>
    </location>
</feature>
<feature type="strand" evidence="30">
    <location>
        <begin position="693"/>
        <end position="700"/>
    </location>
</feature>
<feature type="helix" evidence="30">
    <location>
        <begin position="704"/>
        <end position="706"/>
    </location>
</feature>
<feature type="helix" evidence="30">
    <location>
        <begin position="707"/>
        <end position="720"/>
    </location>
</feature>
<feature type="turn" evidence="30">
    <location>
        <begin position="723"/>
        <end position="725"/>
    </location>
</feature>
<sequence>MESLPRTPTKGRSTQHLSTPSPKNDILAMNGHKRRNTTTPPPKHTLLKPQRTDIHRHSLASQSRISMSPNRELLKNYKGTANLIYGNQKSNSGVTSFYKENVNELNRTQAILFEKKATLDLLKDELTETKEKINAVNLKFETLREEKIKIEQQLNLKNNELISIKEEFLSKKQFMNEGHEIHLKQLAASNKKELKQMENEYKTKIEKLKFMKIKQFENERASLLDKIEEVRNKITMNPSTLQEMLNDVEQKHMLEKEEWLTEYQSQWKKDIELNNKHMQEIESIKKEIENTLKPELAEKKKLLTEKRNAYEAIKVKVKEKEEETTRLRDEVALKQKTNLETLEKIKELEEYIKDTELGMKELNEILIKEETVRRTLHNELQELRGNIRVYCRIRPALKNLENSDTSLINVNEFDDNSGVQSMEVTKIQNTAQVHEFKFDKIFDQQDTNVDVFKEVGQLVQSSLDGYNVCIFAYGQTGSGKTFTMLNPGDGIIPSTISHIFNWINKLKTKGWDYKVNCEFIEIYNENIVDLLRSDNNNKEDTSIGLKHEIRHDQETKTTTITNVTSCKLESEEMVEIILKKANKLRSTASTASNEHSSRSHSIFIIHLSGSNAKTGAHSYGTLNLVDLAGSERINVSQVVGDRLRETQNINKSLSCLGDVIHALGQPDSTKRHIPFRNSKLTYLLQYSLTGDSKTLMFVNISPSSSHINETLNSLRFASKVNSTRLVSRK</sequence>
<organism>
    <name type="scientific">Saccharomyces cerevisiae (strain ATCC 204508 / S288c)</name>
    <name type="common">Baker's yeast</name>
    <dbReference type="NCBI Taxonomy" id="559292"/>
    <lineage>
        <taxon>Eukaryota</taxon>
        <taxon>Fungi</taxon>
        <taxon>Dikarya</taxon>
        <taxon>Ascomycota</taxon>
        <taxon>Saccharomycotina</taxon>
        <taxon>Saccharomycetes</taxon>
        <taxon>Saccharomycetales</taxon>
        <taxon>Saccharomycetaceae</taxon>
        <taxon>Saccharomyces</taxon>
    </lineage>
</organism>
<proteinExistence type="evidence at protein level"/>